<sequence>MKKSIFSKKLLVSFGSLVALASIPLIAISCGQTNTDKSQQPGSGSSTSGGQSGTGLGSGTTTGGQSGTTTGGRSGSGSSSSTTGGQTGTGSDSQDSGAKGTGSDSQDSGAKGTGSDSQDSGAKGTGSDSQDSGAKGTGSDSQDSGAKGTGSDSQDSGAKGTGSDSQDSGNGSTK</sequence>
<accession>P29229</accession>
<organism>
    <name type="scientific">Mesomycoplasma hyorhinis</name>
    <name type="common">Mycoplasma hyorhinis</name>
    <dbReference type="NCBI Taxonomy" id="2100"/>
    <lineage>
        <taxon>Bacteria</taxon>
        <taxon>Bacillati</taxon>
        <taxon>Mycoplasmatota</taxon>
        <taxon>Mycoplasmoidales</taxon>
        <taxon>Metamycoplasmataceae</taxon>
        <taxon>Mesomycoplasma</taxon>
    </lineage>
</organism>
<feature type="signal peptide" evidence="2">
    <location>
        <begin position="1"/>
        <end position="29"/>
    </location>
</feature>
<feature type="chain" id="PRO_0000018214" description="Variant surface antigen B">
    <location>
        <begin position="30"/>
        <end position="174"/>
    </location>
</feature>
<feature type="repeat" description="1">
    <location>
        <begin position="88"/>
        <end position="99"/>
    </location>
</feature>
<feature type="repeat" description="2">
    <location>
        <begin position="100"/>
        <end position="111"/>
    </location>
</feature>
<feature type="repeat" description="3">
    <location>
        <begin position="112"/>
        <end position="123"/>
    </location>
</feature>
<feature type="repeat" description="4">
    <location>
        <begin position="124"/>
        <end position="135"/>
    </location>
</feature>
<feature type="repeat" description="5">
    <location>
        <begin position="136"/>
        <end position="147"/>
    </location>
</feature>
<feature type="repeat" description="6">
    <location>
        <begin position="148"/>
        <end position="159"/>
    </location>
</feature>
<feature type="repeat" description="7">
    <location>
        <begin position="160"/>
        <end position="171"/>
    </location>
</feature>
<feature type="region of interest" description="Disordered" evidence="1">
    <location>
        <begin position="32"/>
        <end position="174"/>
    </location>
</feature>
<feature type="region of interest" description="7 X 12 AA tandem repeats">
    <location>
        <begin position="88"/>
        <end position="171"/>
    </location>
</feature>
<feature type="compositionally biased region" description="Low complexity" evidence="1">
    <location>
        <begin position="38"/>
        <end position="49"/>
    </location>
</feature>
<feature type="compositionally biased region" description="Gly residues" evidence="1">
    <location>
        <begin position="50"/>
        <end position="75"/>
    </location>
</feature>
<feature type="compositionally biased region" description="Low complexity" evidence="1">
    <location>
        <begin position="76"/>
        <end position="97"/>
    </location>
</feature>
<feature type="compositionally biased region" description="Polar residues" evidence="1">
    <location>
        <begin position="102"/>
        <end position="174"/>
    </location>
</feature>
<feature type="lipid moiety-binding region" description="N-palmitoyl cysteine" evidence="2">
    <location>
        <position position="30"/>
    </location>
</feature>
<feature type="lipid moiety-binding region" description="S-diacylglycerol cysteine" evidence="2">
    <location>
        <position position="30"/>
    </location>
</feature>
<name>VLPB_MESHY</name>
<protein>
    <recommendedName>
        <fullName>Variant surface antigen B</fullName>
    </recommendedName>
    <alternativeName>
        <fullName>VlpB prolipoprotein</fullName>
    </alternativeName>
</protein>
<gene>
    <name type="primary">vlpB</name>
</gene>
<proteinExistence type="predicted"/>
<reference key="1">
    <citation type="journal article" date="1991" name="EMBO J.">
        <title>Molecular basis of Mycoplasma surface antigenic variation: a novel set of divergent genes undergo spontaneous mutation of periodic coding regions and 5' regulatory sequences.</title>
        <authorList>
            <person name="Yogev D."/>
            <person name="Rosengarten R."/>
            <person name="Watson-Mckown R."/>
            <person name="Wise K.S."/>
        </authorList>
    </citation>
    <scope>NUCLEOTIDE SEQUENCE [GENOMIC DNA]</scope>
    <source>
        <strain>SK76</strain>
    </source>
</reference>
<comment type="function">
    <text>Responsible for the antigenic diversity for host adaptation.</text>
</comment>
<comment type="subcellular location">
    <subcellularLocation>
        <location evidence="2">Cell membrane</location>
        <topology evidence="2">Lipid-anchor</topology>
    </subcellularLocation>
</comment>
<comment type="miscellaneous">
    <text>The numbers of repeats can vary and is one of the basis of the antigenic diversity.</text>
</comment>
<evidence type="ECO:0000256" key="1">
    <source>
        <dbReference type="SAM" id="MobiDB-lite"/>
    </source>
</evidence>
<evidence type="ECO:0000305" key="2"/>
<dbReference type="EMBL" id="X62936">
    <property type="protein sequence ID" value="CAA44709.1"/>
    <property type="status" value="ALT_SEQ"/>
    <property type="molecule type" value="Genomic_DNA"/>
</dbReference>
<dbReference type="PIR" id="S18654">
    <property type="entry name" value="S18654"/>
</dbReference>
<dbReference type="GO" id="GO:0005886">
    <property type="term" value="C:plasma membrane"/>
    <property type="evidence" value="ECO:0007669"/>
    <property type="project" value="UniProtKB-SubCell"/>
</dbReference>
<dbReference type="InterPro" id="IPR049890">
    <property type="entry name" value="VlpA-F-like_signal"/>
</dbReference>
<dbReference type="NCBIfam" id="NF033817">
    <property type="entry name" value="Mplas_variab_LP"/>
    <property type="match status" value="1"/>
</dbReference>
<dbReference type="PROSITE" id="PS51257">
    <property type="entry name" value="PROKAR_LIPOPROTEIN"/>
    <property type="match status" value="1"/>
</dbReference>
<keyword id="KW-1003">Cell membrane</keyword>
<keyword id="KW-0449">Lipoprotein</keyword>
<keyword id="KW-0472">Membrane</keyword>
<keyword id="KW-0564">Palmitate</keyword>
<keyword id="KW-0677">Repeat</keyword>
<keyword id="KW-0732">Signal</keyword>